<feature type="chain" id="PRO_1000135534" description="Glucose-6-phosphate isomerase">
    <location>
        <begin position="1"/>
        <end position="553"/>
    </location>
</feature>
<feature type="region of interest" description="Disordered" evidence="2">
    <location>
        <begin position="524"/>
        <end position="553"/>
    </location>
</feature>
<feature type="compositionally biased region" description="Basic and acidic residues" evidence="2">
    <location>
        <begin position="541"/>
        <end position="553"/>
    </location>
</feature>
<feature type="active site" description="Proton donor" evidence="1">
    <location>
        <position position="357"/>
    </location>
</feature>
<feature type="active site" evidence="1">
    <location>
        <position position="388"/>
    </location>
</feature>
<feature type="active site" evidence="1">
    <location>
        <position position="514"/>
    </location>
</feature>
<protein>
    <recommendedName>
        <fullName evidence="1">Glucose-6-phosphate isomerase</fullName>
        <shortName evidence="1">GPI</shortName>
        <ecNumber evidence="1">5.3.1.9</ecNumber>
    </recommendedName>
    <alternativeName>
        <fullName evidence="1">Phosphoglucose isomerase</fullName>
        <shortName evidence="1">PGI</shortName>
    </alternativeName>
    <alternativeName>
        <fullName evidence="1">Phosphohexose isomerase</fullName>
        <shortName evidence="1">PHI</shortName>
    </alternativeName>
</protein>
<gene>
    <name evidence="1" type="primary">pgi</name>
    <name type="ordered locus">JTY_0970</name>
</gene>
<reference key="1">
    <citation type="journal article" date="2009" name="Vaccine">
        <title>Whole genome sequence analysis of Mycobacterium bovis bacillus Calmette-Guerin (BCG) Tokyo 172: a comparative study of BCG vaccine substrains.</title>
        <authorList>
            <person name="Seki M."/>
            <person name="Honda I."/>
            <person name="Fujita I."/>
            <person name="Yano I."/>
            <person name="Yamamoto S."/>
            <person name="Koyama A."/>
        </authorList>
    </citation>
    <scope>NUCLEOTIDE SEQUENCE [LARGE SCALE GENOMIC DNA]</scope>
    <source>
        <strain>BCG / Tokyo 172 / ATCC 35737 / TMC 1019</strain>
    </source>
</reference>
<organism>
    <name type="scientific">Mycobacterium bovis (strain BCG / Tokyo 172 / ATCC 35737 / TMC 1019)</name>
    <dbReference type="NCBI Taxonomy" id="561275"/>
    <lineage>
        <taxon>Bacteria</taxon>
        <taxon>Bacillati</taxon>
        <taxon>Actinomycetota</taxon>
        <taxon>Actinomycetes</taxon>
        <taxon>Mycobacteriales</taxon>
        <taxon>Mycobacteriaceae</taxon>
        <taxon>Mycobacterium</taxon>
        <taxon>Mycobacterium tuberculosis complex</taxon>
    </lineage>
</organism>
<evidence type="ECO:0000255" key="1">
    <source>
        <dbReference type="HAMAP-Rule" id="MF_00473"/>
    </source>
</evidence>
<evidence type="ECO:0000256" key="2">
    <source>
        <dbReference type="SAM" id="MobiDB-lite"/>
    </source>
</evidence>
<name>G6PI_MYCBT</name>
<sequence length="553" mass="59974">MTSAPIPDITATPAWDALRRHHDQIGNTHLRQFFADDPGRGRELTVSVGDLYIDYSKHRVTRETLALLIDLARTAHLEERRDQMFAGVHINTSEDRAVLHTALRLPRDAELVVDGQDVVTDVHAVLDAMGAFTDRLRSGEWTGATGKRISTVVNIGIGGSDLGPVMVYQALRHYADAGISARFVSNVDPADLIATLADLDPATTLFIVASKTFSTLETLTNATAARRWLTDALGDAAVSRHFVAVSTNKRLVDDFGINTDNMFGFWDWVGGRYSVDSAIGLSLMTVIGRDAFADFLAGFHIIDRHFATAPLESNAPVLLGLIGLWYSNFFGAQSRTVLPYSNDLSRFPAYLQQLTMESNGKSTRADGSPVSADTGEIFWGEPGTNGQHAFYQLLHQGTRLVPADFIGFAQPLDDLPTAEGTGSMHDLLMSNFFAQTQVLAFGKTAEEIAADGTPAHVVAHKVMPGNRPSTSILASRLTPSVLGQLIALYEHQVFTEGVVWGIDSFDQWGVELGKTQAKALLPVITGAGSPPPQSDSSTDGLVRRYRTERGRAG</sequence>
<dbReference type="EC" id="5.3.1.9" evidence="1"/>
<dbReference type="EMBL" id="AP010918">
    <property type="protein sequence ID" value="BAH25261.1"/>
    <property type="molecule type" value="Genomic_DNA"/>
</dbReference>
<dbReference type="RefSeq" id="WP_003404830.1">
    <property type="nucleotide sequence ID" value="NZ_CP014566.1"/>
</dbReference>
<dbReference type="SMR" id="C1ALT2"/>
<dbReference type="GeneID" id="45424915"/>
<dbReference type="KEGG" id="mbt:JTY_0970"/>
<dbReference type="HOGENOM" id="CLU_017947_3_1_11"/>
<dbReference type="UniPathway" id="UPA00109">
    <property type="reaction ID" value="UER00181"/>
</dbReference>
<dbReference type="UniPathway" id="UPA00138"/>
<dbReference type="GO" id="GO:0005829">
    <property type="term" value="C:cytosol"/>
    <property type="evidence" value="ECO:0007669"/>
    <property type="project" value="TreeGrafter"/>
</dbReference>
<dbReference type="GO" id="GO:0097367">
    <property type="term" value="F:carbohydrate derivative binding"/>
    <property type="evidence" value="ECO:0007669"/>
    <property type="project" value="InterPro"/>
</dbReference>
<dbReference type="GO" id="GO:0004347">
    <property type="term" value="F:glucose-6-phosphate isomerase activity"/>
    <property type="evidence" value="ECO:0007669"/>
    <property type="project" value="UniProtKB-UniRule"/>
</dbReference>
<dbReference type="GO" id="GO:0048029">
    <property type="term" value="F:monosaccharide binding"/>
    <property type="evidence" value="ECO:0007669"/>
    <property type="project" value="TreeGrafter"/>
</dbReference>
<dbReference type="GO" id="GO:0006094">
    <property type="term" value="P:gluconeogenesis"/>
    <property type="evidence" value="ECO:0007669"/>
    <property type="project" value="UniProtKB-UniRule"/>
</dbReference>
<dbReference type="GO" id="GO:0051156">
    <property type="term" value="P:glucose 6-phosphate metabolic process"/>
    <property type="evidence" value="ECO:0007669"/>
    <property type="project" value="TreeGrafter"/>
</dbReference>
<dbReference type="GO" id="GO:0006096">
    <property type="term" value="P:glycolytic process"/>
    <property type="evidence" value="ECO:0007669"/>
    <property type="project" value="UniProtKB-UniRule"/>
</dbReference>
<dbReference type="CDD" id="cd05015">
    <property type="entry name" value="SIS_PGI_1"/>
    <property type="match status" value="1"/>
</dbReference>
<dbReference type="CDD" id="cd05016">
    <property type="entry name" value="SIS_PGI_2"/>
    <property type="match status" value="1"/>
</dbReference>
<dbReference type="FunFam" id="3.40.50.10490:FF:000018">
    <property type="entry name" value="Glucose-6-phosphate isomerase"/>
    <property type="match status" value="1"/>
</dbReference>
<dbReference type="Gene3D" id="1.10.1390.10">
    <property type="match status" value="1"/>
</dbReference>
<dbReference type="Gene3D" id="3.40.50.10490">
    <property type="entry name" value="Glucose-6-phosphate isomerase like protein, domain 1"/>
    <property type="match status" value="2"/>
</dbReference>
<dbReference type="HAMAP" id="MF_00473">
    <property type="entry name" value="G6P_isomerase"/>
    <property type="match status" value="1"/>
</dbReference>
<dbReference type="InterPro" id="IPR001672">
    <property type="entry name" value="G6P_Isomerase"/>
</dbReference>
<dbReference type="InterPro" id="IPR023096">
    <property type="entry name" value="G6P_Isomerase_C"/>
</dbReference>
<dbReference type="InterPro" id="IPR018189">
    <property type="entry name" value="Phosphoglucose_isomerase_CS"/>
</dbReference>
<dbReference type="InterPro" id="IPR046348">
    <property type="entry name" value="SIS_dom_sf"/>
</dbReference>
<dbReference type="InterPro" id="IPR035476">
    <property type="entry name" value="SIS_PGI_1"/>
</dbReference>
<dbReference type="InterPro" id="IPR035482">
    <property type="entry name" value="SIS_PGI_2"/>
</dbReference>
<dbReference type="NCBIfam" id="NF001211">
    <property type="entry name" value="PRK00179.1"/>
    <property type="match status" value="1"/>
</dbReference>
<dbReference type="PANTHER" id="PTHR11469">
    <property type="entry name" value="GLUCOSE-6-PHOSPHATE ISOMERASE"/>
    <property type="match status" value="1"/>
</dbReference>
<dbReference type="PANTHER" id="PTHR11469:SF1">
    <property type="entry name" value="GLUCOSE-6-PHOSPHATE ISOMERASE"/>
    <property type="match status" value="1"/>
</dbReference>
<dbReference type="Pfam" id="PF00342">
    <property type="entry name" value="PGI"/>
    <property type="match status" value="1"/>
</dbReference>
<dbReference type="PRINTS" id="PR00662">
    <property type="entry name" value="G6PISOMERASE"/>
</dbReference>
<dbReference type="SUPFAM" id="SSF53697">
    <property type="entry name" value="SIS domain"/>
    <property type="match status" value="1"/>
</dbReference>
<dbReference type="PROSITE" id="PS00765">
    <property type="entry name" value="P_GLUCOSE_ISOMERASE_1"/>
    <property type="match status" value="1"/>
</dbReference>
<dbReference type="PROSITE" id="PS00174">
    <property type="entry name" value="P_GLUCOSE_ISOMERASE_2"/>
    <property type="match status" value="1"/>
</dbReference>
<dbReference type="PROSITE" id="PS51463">
    <property type="entry name" value="P_GLUCOSE_ISOMERASE_3"/>
    <property type="match status" value="1"/>
</dbReference>
<proteinExistence type="inferred from homology"/>
<comment type="function">
    <text evidence="1">Catalyzes the reversible isomerization of glucose-6-phosphate to fructose-6-phosphate.</text>
</comment>
<comment type="catalytic activity">
    <reaction evidence="1">
        <text>alpha-D-glucose 6-phosphate = beta-D-fructose 6-phosphate</text>
        <dbReference type="Rhea" id="RHEA:11816"/>
        <dbReference type="ChEBI" id="CHEBI:57634"/>
        <dbReference type="ChEBI" id="CHEBI:58225"/>
        <dbReference type="EC" id="5.3.1.9"/>
    </reaction>
</comment>
<comment type="pathway">
    <text evidence="1">Carbohydrate biosynthesis; gluconeogenesis.</text>
</comment>
<comment type="pathway">
    <text evidence="1">Carbohydrate degradation; glycolysis; D-glyceraldehyde 3-phosphate and glycerone phosphate from D-glucose: step 2/4.</text>
</comment>
<comment type="subcellular location">
    <subcellularLocation>
        <location evidence="1">Cytoplasm</location>
    </subcellularLocation>
</comment>
<comment type="similarity">
    <text evidence="1">Belongs to the GPI family.</text>
</comment>
<keyword id="KW-0963">Cytoplasm</keyword>
<keyword id="KW-0312">Gluconeogenesis</keyword>
<keyword id="KW-0324">Glycolysis</keyword>
<keyword id="KW-0413">Isomerase</keyword>
<accession>C1ALT2</accession>